<organism>
    <name type="scientific">Arabidopsis thaliana</name>
    <name type="common">Mouse-ear cress</name>
    <dbReference type="NCBI Taxonomy" id="3702"/>
    <lineage>
        <taxon>Eukaryota</taxon>
        <taxon>Viridiplantae</taxon>
        <taxon>Streptophyta</taxon>
        <taxon>Embryophyta</taxon>
        <taxon>Tracheophyta</taxon>
        <taxon>Spermatophyta</taxon>
        <taxon>Magnoliopsida</taxon>
        <taxon>eudicotyledons</taxon>
        <taxon>Gunneridae</taxon>
        <taxon>Pentapetalae</taxon>
        <taxon>rosids</taxon>
        <taxon>malvids</taxon>
        <taxon>Brassicales</taxon>
        <taxon>Brassicaceae</taxon>
        <taxon>Camelineae</taxon>
        <taxon>Arabidopsis</taxon>
    </lineage>
</organism>
<sequence length="315" mass="34175">MTKREYNSQPEMLEGAKSIGAGAATIASAGAAIGIGNVFSSLIHSVARNPSLATTTVLVVTLTLLGGVAAFYLHSFRLKGPLKKIIYLFLVFFIAVGISLIRIKAIHLLGLALPLLVPPLVWNAIGGGGEALPSTGPNGASSYSEWFTYTSDLEDSASSGRTSSSVNQPIQREQAGPSNALPEPAASPVAQQQDHLDQPFGEGGEREARAQEHDRISAEVETITSACENLEAAMVRKAHILLHQRGVTLGDPEDVKRALQLALHDDWEHDIDDRKRHFTVLRRDFGTARCERWNPFIDELRGLGNRQVNARHYVD</sequence>
<keyword id="KW-0472">Membrane</keyword>
<keyword id="KW-0496">Mitochondrion</keyword>
<keyword id="KW-1185">Reference proteome</keyword>
<keyword id="KW-0812">Transmembrane</keyword>
<keyword id="KW-1133">Transmembrane helix</keyword>
<protein>
    <recommendedName>
        <fullName>Uncharacterized ATP synthase C chain-like protein</fullName>
    </recommendedName>
    <alternativeName>
        <fullName>ORF315</fullName>
    </alternativeName>
</protein>
<geneLocation type="mitochondrion"/>
<name>M040_ARATH</name>
<proteinExistence type="inferred from homology"/>
<evidence type="ECO:0000255" key="1"/>
<evidence type="ECO:0000256" key="2">
    <source>
        <dbReference type="SAM" id="MobiDB-lite"/>
    </source>
</evidence>
<evidence type="ECO:0000305" key="3"/>
<comment type="subcellular location">
    <subcellularLocation>
        <location evidence="3">Mitochondrion membrane</location>
        <topology evidence="3">Multi-pass membrane protein</topology>
    </subcellularLocation>
</comment>
<comment type="similarity">
    <text evidence="3">Belongs to the ATPase C chain family.</text>
</comment>
<gene>
    <name type="ordered locus">AtMg00040</name>
</gene>
<accession>P93278</accession>
<dbReference type="EMBL" id="Y08501">
    <property type="protein sequence ID" value="CAA69782.1"/>
    <property type="molecule type" value="Genomic_DNA"/>
</dbReference>
<dbReference type="EMBL" id="BK010421">
    <property type="status" value="NOT_ANNOTATED_CDS"/>
    <property type="molecule type" value="Genomic_DNA"/>
</dbReference>
<dbReference type="RefSeq" id="NP_085476.1">
    <property type="nucleotide sequence ID" value="NC_001284.2"/>
</dbReference>
<dbReference type="SMR" id="P93278"/>
<dbReference type="FunCoup" id="P93278">
    <property type="interactions" value="3"/>
</dbReference>
<dbReference type="STRING" id="3702.P93278"/>
<dbReference type="iPTMnet" id="P93278"/>
<dbReference type="PaxDb" id="3702-ATMG00040.1"/>
<dbReference type="EnsemblPlants" id="ATMG00040.1">
    <property type="protein sequence ID" value="ATMG00040.1"/>
    <property type="gene ID" value="ATMG00040"/>
</dbReference>
<dbReference type="Gramene" id="ATMG00040.1">
    <property type="protein sequence ID" value="ATMG00040.1"/>
    <property type="gene ID" value="ATMG00040"/>
</dbReference>
<dbReference type="Araport" id="ATMG00040"/>
<dbReference type="TAIR" id="ATMG00040">
    <property type="gene designation" value="ORF315"/>
</dbReference>
<dbReference type="HOGENOM" id="CLU_883826_0_0_1"/>
<dbReference type="InParanoid" id="P93278"/>
<dbReference type="OMA" id="YSEWFTY"/>
<dbReference type="PRO" id="PR:P93278"/>
<dbReference type="Proteomes" id="UP000006548">
    <property type="component" value="Mitochondrion MT"/>
</dbReference>
<dbReference type="GO" id="GO:0031966">
    <property type="term" value="C:mitochondrial membrane"/>
    <property type="evidence" value="ECO:0007669"/>
    <property type="project" value="UniProtKB-SubCell"/>
</dbReference>
<dbReference type="GO" id="GO:0045259">
    <property type="term" value="C:proton-transporting ATP synthase complex"/>
    <property type="evidence" value="ECO:0007669"/>
    <property type="project" value="InterPro"/>
</dbReference>
<dbReference type="GO" id="GO:0033177">
    <property type="term" value="C:proton-transporting two-sector ATPase complex, proton-transporting domain"/>
    <property type="evidence" value="ECO:0007669"/>
    <property type="project" value="InterPro"/>
</dbReference>
<dbReference type="GO" id="GO:0015078">
    <property type="term" value="F:proton transmembrane transporter activity"/>
    <property type="evidence" value="ECO:0007669"/>
    <property type="project" value="InterPro"/>
</dbReference>
<dbReference type="GO" id="GO:0015986">
    <property type="term" value="P:proton motive force-driven ATP synthesis"/>
    <property type="evidence" value="ECO:0007669"/>
    <property type="project" value="InterPro"/>
</dbReference>
<dbReference type="Gene3D" id="1.20.20.10">
    <property type="entry name" value="F1F0 ATP synthase subunit C"/>
    <property type="match status" value="1"/>
</dbReference>
<dbReference type="InterPro" id="IPR000454">
    <property type="entry name" value="ATP_synth_F0_csu"/>
</dbReference>
<dbReference type="InterPro" id="IPR038662">
    <property type="entry name" value="ATP_synth_F0_csu_sf"/>
</dbReference>
<dbReference type="InterPro" id="IPR002379">
    <property type="entry name" value="ATPase_proteolipid_c-like_dom"/>
</dbReference>
<dbReference type="InterPro" id="IPR035921">
    <property type="entry name" value="F/V-ATP_Csub_sf"/>
</dbReference>
<dbReference type="PANTHER" id="PTHR10031">
    <property type="entry name" value="ATP SYNTHASE LIPID-BINDING PROTEIN, MITOCHONDRIAL"/>
    <property type="match status" value="1"/>
</dbReference>
<dbReference type="PANTHER" id="PTHR10031:SF0">
    <property type="entry name" value="ATPASE PROTEIN 9"/>
    <property type="match status" value="1"/>
</dbReference>
<dbReference type="Pfam" id="PF00137">
    <property type="entry name" value="ATP-synt_C"/>
    <property type="match status" value="1"/>
</dbReference>
<dbReference type="PRINTS" id="PR00124">
    <property type="entry name" value="ATPASEC"/>
</dbReference>
<dbReference type="SUPFAM" id="SSF81333">
    <property type="entry name" value="F1F0 ATP synthase subunit C"/>
    <property type="match status" value="1"/>
</dbReference>
<feature type="chain" id="PRO_0000112241" description="Uncharacterized ATP synthase C chain-like protein">
    <location>
        <begin position="1"/>
        <end position="315"/>
    </location>
</feature>
<feature type="transmembrane region" description="Helical" evidence="1">
    <location>
        <begin position="19"/>
        <end position="39"/>
    </location>
</feature>
<feature type="transmembrane region" description="Helical" evidence="1">
    <location>
        <begin position="56"/>
        <end position="76"/>
    </location>
</feature>
<feature type="transmembrane region" description="Helical" evidence="1">
    <location>
        <begin position="81"/>
        <end position="101"/>
    </location>
</feature>
<feature type="region of interest" description="Disordered" evidence="2">
    <location>
        <begin position="154"/>
        <end position="214"/>
    </location>
</feature>
<feature type="compositionally biased region" description="Polar residues" evidence="2">
    <location>
        <begin position="154"/>
        <end position="171"/>
    </location>
</feature>
<feature type="compositionally biased region" description="Basic and acidic residues" evidence="2">
    <location>
        <begin position="203"/>
        <end position="214"/>
    </location>
</feature>
<reference key="1">
    <citation type="journal article" date="1997" name="Nat. Genet.">
        <title>The mitochondrial genome of Arabidopsis thaliana contains 57 genes in 366,924 nucleotides.</title>
        <authorList>
            <person name="Unseld M."/>
            <person name="Marienfeld J.R."/>
            <person name="Brandt P."/>
            <person name="Brennicke A."/>
        </authorList>
    </citation>
    <scope>NUCLEOTIDE SEQUENCE [LARGE SCALE GENOMIC DNA]</scope>
    <source>
        <strain>cv. C24</strain>
    </source>
</reference>
<reference key="2">
    <citation type="journal article" date="2018" name="Plant Cell">
        <title>Correction of persistent errors in Arabidopsis reference mitochondrial genomes.</title>
        <authorList>
            <person name="Sloan D.B."/>
            <person name="Wu Z."/>
            <person name="Sharbrough J."/>
        </authorList>
    </citation>
    <scope>NUCLEOTIDE SEQUENCE [LARGE SCALE GENOMIC DNA]</scope>
    <source>
        <strain>cv. Columbia</strain>
    </source>
</reference>